<protein>
    <recommendedName>
        <fullName>Putative pentatricopeptide repeat-containing protein At1g13630</fullName>
    </recommendedName>
</protein>
<proteinExistence type="inferred from homology"/>
<accession>Q9LMY5</accession>
<accession>F4HSJ0</accession>
<accession>F4HSJ1</accession>
<accession>Q9FZ67</accession>
<sequence length="826" mass="93634">MICRWIAFNSSKVSRSLSPFSSLLFTKSSFSVAKMDDESLPTTNSTSDHRGFYKEILFGMKKIGFREFLHGYHFRGLVSELRHVHVEEIMDELMSESSDLSVWFFKELRDIYAFRHSSFSTLLVSHVLAGQRRFKELQVILEQLLQEEGTLCELLSNSFRKWESTGLVWDMLLFLSSRLRMVDDSLYILKKMKDQNLNVSTQSYNSVLYHFRETDKMWDVYKEIKDKNEHTYSTVVDGLCRQQKLEDAVLFLRTSEWKDIGPSVVSFNSIMSGYCKLGFVDMAKSFFCTVLKCGLVPSVYSHNILINGLCLVGSIAEALELASDMNKHGVEPDSVTYNILAKGFHLLGMISGAWEVIRDMLDKGLSPDVITYTILLCGQCQLGNIDMGLVLLKDMLSRGFELNSIIPCSVMLSGLCKTGRIDEALSLFNQMKADGLSPDLVAYSIVIHGLCKLGKFDMALWLYDEMCDKRILPNSRTHGALLLGLCQKGMLLEARSLLDSLISSGETLDIVLYNIVIDGYAKSGCIEEALELFKVVIETGITPSVATFNSLIYGYCKTQNIAEARKILDVIKLYGLAPSVVSYTTLMDAYANCGNTKSIDELRREMKAEGIPPTNVTYSVIFKGLCRGWKHENCNHVLRERIFEKCKQGLRDMESEGIPPDQITYNTIIQYLCRVKHLSGAFVFLEIMKSRNLDASSATYNILIDSLCVYGYIRKADSFIYSLQEQNVSLSKFAYTTLIKAHCVKGDPEMAVKLFHQLLHRGFNVSIRDYSAVINRLCRRHLVNESKFFFCLMLSQGISPDLDICEVMIKSDELLSWTIKWGLLPD</sequence>
<dbReference type="EMBL" id="AC027134">
    <property type="protein sequence ID" value="AAF99828.1"/>
    <property type="status" value="ALT_INIT"/>
    <property type="molecule type" value="Genomic_DNA"/>
</dbReference>
<dbReference type="EMBL" id="AC027656">
    <property type="protein sequence ID" value="AAF81289.1"/>
    <property type="status" value="ALT_SEQ"/>
    <property type="molecule type" value="Genomic_DNA"/>
</dbReference>
<dbReference type="EMBL" id="CP002684">
    <property type="protein sequence ID" value="AEE29049.1"/>
    <property type="status" value="ALT_SEQ"/>
    <property type="molecule type" value="Genomic_DNA"/>
</dbReference>
<dbReference type="EMBL" id="CP002684">
    <property type="protein sequence ID" value="AEE29050.2"/>
    <property type="molecule type" value="Genomic_DNA"/>
</dbReference>
<dbReference type="PIR" id="D86269">
    <property type="entry name" value="D86269"/>
</dbReference>
<dbReference type="RefSeq" id="NP_001318994.1">
    <molecule id="Q9LMY5-1"/>
    <property type="nucleotide sequence ID" value="NM_001332074.1"/>
</dbReference>
<dbReference type="RefSeq" id="NP_172820.4">
    <property type="nucleotide sequence ID" value="NM_101233.4"/>
</dbReference>
<dbReference type="SMR" id="Q9LMY5"/>
<dbReference type="BioGRID" id="23164">
    <property type="interactions" value="1"/>
</dbReference>
<dbReference type="FunCoup" id="Q9LMY5">
    <property type="interactions" value="15"/>
</dbReference>
<dbReference type="iPTMnet" id="Q9LMY5"/>
<dbReference type="PaxDb" id="3702-AT1G13630.1"/>
<dbReference type="EnsemblPlants" id="AT1G13630.2">
    <molecule id="Q9LMY5-1"/>
    <property type="protein sequence ID" value="AT1G13630.2"/>
    <property type="gene ID" value="AT1G13630"/>
</dbReference>
<dbReference type="GeneID" id="837924"/>
<dbReference type="Gramene" id="AT1G13630.2">
    <molecule id="Q9LMY5-1"/>
    <property type="protein sequence ID" value="AT1G13630.2"/>
    <property type="gene ID" value="AT1G13630"/>
</dbReference>
<dbReference type="KEGG" id="ath:AT1G13630"/>
<dbReference type="Araport" id="AT1G13630"/>
<dbReference type="TAIR" id="AT1G13630"/>
<dbReference type="eggNOG" id="KOG4197">
    <property type="taxonomic scope" value="Eukaryota"/>
</dbReference>
<dbReference type="HOGENOM" id="CLU_002706_49_12_1"/>
<dbReference type="InParanoid" id="Q9LMY5"/>
<dbReference type="PRO" id="PR:Q9LMY5"/>
<dbReference type="Proteomes" id="UP000006548">
    <property type="component" value="Chromosome 1"/>
</dbReference>
<dbReference type="ExpressionAtlas" id="Q9LMY5">
    <property type="expression patterns" value="baseline and differential"/>
</dbReference>
<dbReference type="Gene3D" id="1.25.40.10">
    <property type="entry name" value="Tetratricopeptide repeat domain"/>
    <property type="match status" value="6"/>
</dbReference>
<dbReference type="InterPro" id="IPR002885">
    <property type="entry name" value="Pentatricopeptide_rpt"/>
</dbReference>
<dbReference type="InterPro" id="IPR050667">
    <property type="entry name" value="PPR-containing_protein"/>
</dbReference>
<dbReference type="InterPro" id="IPR011990">
    <property type="entry name" value="TPR-like_helical_dom_sf"/>
</dbReference>
<dbReference type="NCBIfam" id="TIGR00756">
    <property type="entry name" value="PPR"/>
    <property type="match status" value="13"/>
</dbReference>
<dbReference type="PANTHER" id="PTHR47939">
    <property type="entry name" value="MEMBRANE-ASSOCIATED SALT-INDUCIBLE PROTEIN-LIKE"/>
    <property type="match status" value="1"/>
</dbReference>
<dbReference type="PANTHER" id="PTHR47939:SF13">
    <property type="entry name" value="OS03G0201400 PROTEIN"/>
    <property type="match status" value="1"/>
</dbReference>
<dbReference type="Pfam" id="PF01535">
    <property type="entry name" value="PPR"/>
    <property type="match status" value="2"/>
</dbReference>
<dbReference type="Pfam" id="PF13041">
    <property type="entry name" value="PPR_2"/>
    <property type="match status" value="8"/>
</dbReference>
<dbReference type="SUPFAM" id="SSF81901">
    <property type="entry name" value="HCP-like"/>
    <property type="match status" value="1"/>
</dbReference>
<dbReference type="PROSITE" id="PS51375">
    <property type="entry name" value="PPR"/>
    <property type="match status" value="17"/>
</dbReference>
<reference key="1">
    <citation type="journal article" date="2000" name="Nature">
        <title>Sequence and analysis of chromosome 1 of the plant Arabidopsis thaliana.</title>
        <authorList>
            <person name="Theologis A."/>
            <person name="Ecker J.R."/>
            <person name="Palm C.J."/>
            <person name="Federspiel N.A."/>
            <person name="Kaul S."/>
            <person name="White O."/>
            <person name="Alonso J."/>
            <person name="Altafi H."/>
            <person name="Araujo R."/>
            <person name="Bowman C.L."/>
            <person name="Brooks S.Y."/>
            <person name="Buehler E."/>
            <person name="Chan A."/>
            <person name="Chao Q."/>
            <person name="Chen H."/>
            <person name="Cheuk R.F."/>
            <person name="Chin C.W."/>
            <person name="Chung M.K."/>
            <person name="Conn L."/>
            <person name="Conway A.B."/>
            <person name="Conway A.R."/>
            <person name="Creasy T.H."/>
            <person name="Dewar K."/>
            <person name="Dunn P."/>
            <person name="Etgu P."/>
            <person name="Feldblyum T.V."/>
            <person name="Feng J.-D."/>
            <person name="Fong B."/>
            <person name="Fujii C.Y."/>
            <person name="Gill J.E."/>
            <person name="Goldsmith A.D."/>
            <person name="Haas B."/>
            <person name="Hansen N.F."/>
            <person name="Hughes B."/>
            <person name="Huizar L."/>
            <person name="Hunter J.L."/>
            <person name="Jenkins J."/>
            <person name="Johnson-Hopson C."/>
            <person name="Khan S."/>
            <person name="Khaykin E."/>
            <person name="Kim C.J."/>
            <person name="Koo H.L."/>
            <person name="Kremenetskaia I."/>
            <person name="Kurtz D.B."/>
            <person name="Kwan A."/>
            <person name="Lam B."/>
            <person name="Langin-Hooper S."/>
            <person name="Lee A."/>
            <person name="Lee J.M."/>
            <person name="Lenz C.A."/>
            <person name="Li J.H."/>
            <person name="Li Y.-P."/>
            <person name="Lin X."/>
            <person name="Liu S.X."/>
            <person name="Liu Z.A."/>
            <person name="Luros J.S."/>
            <person name="Maiti R."/>
            <person name="Marziali A."/>
            <person name="Militscher J."/>
            <person name="Miranda M."/>
            <person name="Nguyen M."/>
            <person name="Nierman W.C."/>
            <person name="Osborne B.I."/>
            <person name="Pai G."/>
            <person name="Peterson J."/>
            <person name="Pham P.K."/>
            <person name="Rizzo M."/>
            <person name="Rooney T."/>
            <person name="Rowley D."/>
            <person name="Sakano H."/>
            <person name="Salzberg S.L."/>
            <person name="Schwartz J.R."/>
            <person name="Shinn P."/>
            <person name="Southwick A.M."/>
            <person name="Sun H."/>
            <person name="Tallon L.J."/>
            <person name="Tambunga G."/>
            <person name="Toriumi M.J."/>
            <person name="Town C.D."/>
            <person name="Utterback T."/>
            <person name="Van Aken S."/>
            <person name="Vaysberg M."/>
            <person name="Vysotskaia V.S."/>
            <person name="Walker M."/>
            <person name="Wu D."/>
            <person name="Yu G."/>
            <person name="Fraser C.M."/>
            <person name="Venter J.C."/>
            <person name="Davis R.W."/>
        </authorList>
    </citation>
    <scope>NUCLEOTIDE SEQUENCE [LARGE SCALE GENOMIC DNA]</scope>
    <source>
        <strain>cv. Columbia</strain>
    </source>
</reference>
<reference key="2">
    <citation type="journal article" date="2017" name="Plant J.">
        <title>Araport11: a complete reannotation of the Arabidopsis thaliana reference genome.</title>
        <authorList>
            <person name="Cheng C.Y."/>
            <person name="Krishnakumar V."/>
            <person name="Chan A.P."/>
            <person name="Thibaud-Nissen F."/>
            <person name="Schobel S."/>
            <person name="Town C.D."/>
        </authorList>
    </citation>
    <scope>GENOME REANNOTATION</scope>
    <source>
        <strain>cv. Columbia</strain>
    </source>
</reference>
<reference key="3">
    <citation type="journal article" date="2004" name="Plant Cell">
        <title>Genome-wide analysis of Arabidopsis pentatricopeptide repeat proteins reveals their essential role in organelle biogenesis.</title>
        <authorList>
            <person name="Lurin C."/>
            <person name="Andres C."/>
            <person name="Aubourg S."/>
            <person name="Bellaoui M."/>
            <person name="Bitton F."/>
            <person name="Bruyere C."/>
            <person name="Caboche M."/>
            <person name="Debast C."/>
            <person name="Gualberto J."/>
            <person name="Hoffmann B."/>
            <person name="Lecharny A."/>
            <person name="Le Ret M."/>
            <person name="Martin-Magniette M.-L."/>
            <person name="Mireau H."/>
            <person name="Peeters N."/>
            <person name="Renou J.-P."/>
            <person name="Szurek B."/>
            <person name="Taconnat L."/>
            <person name="Small I."/>
        </authorList>
    </citation>
    <scope>GENE FAMILY</scope>
</reference>
<organism>
    <name type="scientific">Arabidopsis thaliana</name>
    <name type="common">Mouse-ear cress</name>
    <dbReference type="NCBI Taxonomy" id="3702"/>
    <lineage>
        <taxon>Eukaryota</taxon>
        <taxon>Viridiplantae</taxon>
        <taxon>Streptophyta</taxon>
        <taxon>Embryophyta</taxon>
        <taxon>Tracheophyta</taxon>
        <taxon>Spermatophyta</taxon>
        <taxon>Magnoliopsida</taxon>
        <taxon>eudicotyledons</taxon>
        <taxon>Gunneridae</taxon>
        <taxon>Pentapetalae</taxon>
        <taxon>rosids</taxon>
        <taxon>malvids</taxon>
        <taxon>Brassicales</taxon>
        <taxon>Brassicaceae</taxon>
        <taxon>Camelineae</taxon>
        <taxon>Arabidopsis</taxon>
    </lineage>
</organism>
<keyword id="KW-0025">Alternative splicing</keyword>
<keyword id="KW-1185">Reference proteome</keyword>
<keyword id="KW-0677">Repeat</keyword>
<comment type="alternative products">
    <event type="alternative splicing"/>
    <isoform>
        <id>Q9LMY5-1</id>
        <name>1</name>
        <sequence type="displayed"/>
    </isoform>
    <text>A number of isoforms are produced. According to EST sequences.</text>
</comment>
<comment type="similarity">
    <text evidence="1">Belongs to the PPR family. P subfamily.</text>
</comment>
<comment type="sequence caution" evidence="1">
    <conflict type="erroneous gene model prediction">
        <sequence resource="EMBL-CDS" id="AAF81289"/>
    </conflict>
</comment>
<comment type="sequence caution" evidence="1">
    <conflict type="erroneous initiation">
        <sequence resource="EMBL-CDS" id="AAF99828"/>
    </conflict>
</comment>
<comment type="sequence caution" evidence="1">
    <conflict type="erroneous gene model prediction">
        <sequence resource="EMBL-CDS" id="AEE29049"/>
    </conflict>
</comment>
<comment type="online information" name="Pentatricopeptide repeat proteins">
    <link uri="https://ppr.plantenergy.uwa.edu.au"/>
</comment>
<gene>
    <name type="ordered locus">At1g13630</name>
    <name type="ORF">F132B4.10</name>
    <name type="ORF">F21F23.6</name>
</gene>
<evidence type="ECO:0000305" key="1"/>
<feature type="chain" id="PRO_0000342782" description="Putative pentatricopeptide repeat-containing protein At1g13630">
    <location>
        <begin position="1"/>
        <end position="826"/>
    </location>
</feature>
<feature type="repeat" description="PPR 1">
    <location>
        <begin position="228"/>
        <end position="262"/>
    </location>
</feature>
<feature type="repeat" description="PPR 2">
    <location>
        <begin position="263"/>
        <end position="297"/>
    </location>
</feature>
<feature type="repeat" description="PPR 3">
    <location>
        <begin position="298"/>
        <end position="332"/>
    </location>
</feature>
<feature type="repeat" description="PPR 4">
    <location>
        <begin position="333"/>
        <end position="367"/>
    </location>
</feature>
<feature type="repeat" description="PPR 5">
    <location>
        <begin position="368"/>
        <end position="402"/>
    </location>
</feature>
<feature type="repeat" description="PPR 6">
    <location>
        <begin position="404"/>
        <end position="438"/>
    </location>
</feature>
<feature type="repeat" description="PPR 7">
    <location>
        <begin position="439"/>
        <end position="473"/>
    </location>
</feature>
<feature type="repeat" description="PPR 8">
    <location>
        <begin position="474"/>
        <end position="508"/>
    </location>
</feature>
<feature type="repeat" description="PPR 9">
    <location>
        <begin position="509"/>
        <end position="543"/>
    </location>
</feature>
<feature type="repeat" description="PPR 10">
    <location>
        <begin position="544"/>
        <end position="578"/>
    </location>
</feature>
<feature type="repeat" description="PPR 11">
    <location>
        <begin position="579"/>
        <end position="613"/>
    </location>
</feature>
<feature type="repeat" description="PPR 12">
    <location>
        <begin position="614"/>
        <end position="648"/>
    </location>
</feature>
<feature type="repeat" description="PPR 13">
    <location>
        <begin position="661"/>
        <end position="695"/>
    </location>
</feature>
<feature type="repeat" description="PPR 14">
    <location>
        <begin position="696"/>
        <end position="730"/>
    </location>
</feature>
<feature type="repeat" description="PPR 15">
    <location>
        <begin position="731"/>
        <end position="765"/>
    </location>
</feature>
<feature type="repeat" description="PPR 16">
    <location>
        <begin position="766"/>
        <end position="800"/>
    </location>
</feature>
<name>PPR41_ARATH</name>